<name>CUTC_TREDE</name>
<proteinExistence type="inferred from homology"/>
<reference key="1">
    <citation type="journal article" date="2004" name="Proc. Natl. Acad. Sci. U.S.A.">
        <title>Comparison of the genome of the oral pathogen Treponema denticola with other spirochete genomes.</title>
        <authorList>
            <person name="Seshadri R."/>
            <person name="Myers G.S.A."/>
            <person name="Tettelin H."/>
            <person name="Eisen J.A."/>
            <person name="Heidelberg J.F."/>
            <person name="Dodson R.J."/>
            <person name="Davidsen T.M."/>
            <person name="DeBoy R.T."/>
            <person name="Fouts D.E."/>
            <person name="Haft D.H."/>
            <person name="Selengut J."/>
            <person name="Ren Q."/>
            <person name="Brinkac L.M."/>
            <person name="Madupu R."/>
            <person name="Kolonay J.F."/>
            <person name="Durkin S.A."/>
            <person name="Daugherty S.C."/>
            <person name="Shetty J."/>
            <person name="Shvartsbeyn A."/>
            <person name="Gebregeorgis E."/>
            <person name="Geer K."/>
            <person name="Tsegaye G."/>
            <person name="Malek J.A."/>
            <person name="Ayodeji B."/>
            <person name="Shatsman S."/>
            <person name="McLeod M.P."/>
            <person name="Smajs D."/>
            <person name="Howell J.K."/>
            <person name="Pal S."/>
            <person name="Amin A."/>
            <person name="Vashisth P."/>
            <person name="McNeill T.Z."/>
            <person name="Xiang Q."/>
            <person name="Sodergren E."/>
            <person name="Baca E."/>
            <person name="Weinstock G.M."/>
            <person name="Norris S.J."/>
            <person name="Fraser C.M."/>
            <person name="Paulsen I.T."/>
        </authorList>
    </citation>
    <scope>NUCLEOTIDE SEQUENCE [LARGE SCALE GENOMIC DNA]</scope>
    <source>
        <strain>ATCC 35405 / DSM 14222 / CIP 103919 / JCM 8153 / KCTC 15104</strain>
    </source>
</reference>
<organism>
    <name type="scientific">Treponema denticola (strain ATCC 35405 / DSM 14222 / CIP 103919 / JCM 8153 / KCTC 15104)</name>
    <dbReference type="NCBI Taxonomy" id="243275"/>
    <lineage>
        <taxon>Bacteria</taxon>
        <taxon>Pseudomonadati</taxon>
        <taxon>Spirochaetota</taxon>
        <taxon>Spirochaetia</taxon>
        <taxon>Spirochaetales</taxon>
        <taxon>Treponemataceae</taxon>
        <taxon>Treponema</taxon>
    </lineage>
</organism>
<dbReference type="EMBL" id="AE017226">
    <property type="protein sequence ID" value="AAS12762.1"/>
    <property type="molecule type" value="Genomic_DNA"/>
</dbReference>
<dbReference type="RefSeq" id="NP_972843.1">
    <property type="nucleotide sequence ID" value="NC_002967.9"/>
</dbReference>
<dbReference type="RefSeq" id="WP_002674428.1">
    <property type="nucleotide sequence ID" value="NC_002967.9"/>
</dbReference>
<dbReference type="SMR" id="Q73KH5"/>
<dbReference type="STRING" id="243275.TDE_2243"/>
<dbReference type="PaxDb" id="243275-TDE_2243"/>
<dbReference type="GeneID" id="2741348"/>
<dbReference type="KEGG" id="tde:TDE_2243"/>
<dbReference type="PATRIC" id="fig|243275.7.peg.2117"/>
<dbReference type="eggNOG" id="COG3142">
    <property type="taxonomic scope" value="Bacteria"/>
</dbReference>
<dbReference type="HOGENOM" id="CLU_050555_3_2_12"/>
<dbReference type="OrthoDB" id="9815677at2"/>
<dbReference type="Proteomes" id="UP000008212">
    <property type="component" value="Chromosome"/>
</dbReference>
<dbReference type="GO" id="GO:0005737">
    <property type="term" value="C:cytoplasm"/>
    <property type="evidence" value="ECO:0007669"/>
    <property type="project" value="UniProtKB-SubCell"/>
</dbReference>
<dbReference type="GO" id="GO:0005507">
    <property type="term" value="F:copper ion binding"/>
    <property type="evidence" value="ECO:0007669"/>
    <property type="project" value="TreeGrafter"/>
</dbReference>
<dbReference type="Gene3D" id="3.20.20.380">
    <property type="entry name" value="Copper homeostasis (CutC) domain"/>
    <property type="match status" value="1"/>
</dbReference>
<dbReference type="HAMAP" id="MF_00795">
    <property type="entry name" value="CutC"/>
    <property type="match status" value="1"/>
</dbReference>
<dbReference type="InterPro" id="IPR005627">
    <property type="entry name" value="CutC-like"/>
</dbReference>
<dbReference type="InterPro" id="IPR036822">
    <property type="entry name" value="CutC-like_dom_sf"/>
</dbReference>
<dbReference type="PANTHER" id="PTHR12598">
    <property type="entry name" value="COPPER HOMEOSTASIS PROTEIN CUTC"/>
    <property type="match status" value="1"/>
</dbReference>
<dbReference type="PANTHER" id="PTHR12598:SF0">
    <property type="entry name" value="COPPER HOMEOSTASIS PROTEIN CUTC HOMOLOG"/>
    <property type="match status" value="1"/>
</dbReference>
<dbReference type="Pfam" id="PF03932">
    <property type="entry name" value="CutC"/>
    <property type="match status" value="1"/>
</dbReference>
<dbReference type="SUPFAM" id="SSF110395">
    <property type="entry name" value="CutC-like"/>
    <property type="match status" value="1"/>
</dbReference>
<comment type="subcellular location">
    <subcellularLocation>
        <location evidence="1">Cytoplasm</location>
    </subcellularLocation>
</comment>
<comment type="similarity">
    <text evidence="1">Belongs to the CutC family.</text>
</comment>
<comment type="caution">
    <text evidence="1">Once thought to be involved in copper homeostasis, experiments in E.coli have shown this is not the case.</text>
</comment>
<evidence type="ECO:0000255" key="1">
    <source>
        <dbReference type="HAMAP-Rule" id="MF_00795"/>
    </source>
</evidence>
<accession>Q73KH5</accession>
<protein>
    <recommendedName>
        <fullName evidence="1">PF03932 family protein CutC</fullName>
    </recommendedName>
</protein>
<feature type="chain" id="PRO_0000215077" description="PF03932 family protein CutC">
    <location>
        <begin position="1"/>
        <end position="246"/>
    </location>
</feature>
<keyword id="KW-0963">Cytoplasm</keyword>
<keyword id="KW-1185">Reference proteome</keyword>
<sequence>MKNIKIEICAGSFEDAVLAEKAGASRIELNSSLFLGGLTPSLGTLKLVKKETHLEVMAMVRPRAAGFFYSSYEYKTMLEDAKLFIDNGADGLVFGFLKKDGTIDAKRCEALIKIAESRDKVFHRAIDVVPDPLKALDELISLGFTRVLTSGQEPTAYEGADLIAKMVKRAKGRIEILPGGGITEKNASKIIKLTGVDQIHFAALKRREEPSTKANPSIYYGGALYPPEDSIEVAGLDEMTKVIKSL</sequence>
<gene>
    <name evidence="1" type="primary">cutC</name>
    <name type="ordered locus">TDE_2243</name>
</gene>